<accession>Q96HL8</accession>
<accession>A8K8E7</accession>
<accession>B7WNJ4</accession>
<accession>B7WPL6</accession>
<accession>Q8NEL2</accession>
<accession>Q9H5X4</accession>
<accession>Q9Y3V5</accession>
<proteinExistence type="evidence at protein level"/>
<dbReference type="EMBL" id="AK026507">
    <property type="protein sequence ID" value="BAB15493.1"/>
    <property type="molecule type" value="mRNA"/>
</dbReference>
<dbReference type="EMBL" id="AK292312">
    <property type="protein sequence ID" value="BAF85001.1"/>
    <property type="molecule type" value="mRNA"/>
</dbReference>
<dbReference type="EMBL" id="CR457361">
    <property type="protein sequence ID" value="CAG33642.1"/>
    <property type="molecule type" value="mRNA"/>
</dbReference>
<dbReference type="EMBL" id="AL050373">
    <property type="protein sequence ID" value="CAB43679.2"/>
    <property type="molecule type" value="mRNA"/>
</dbReference>
<dbReference type="EMBL" id="AC079779">
    <property type="protein sequence ID" value="AAY14957.1"/>
    <property type="molecule type" value="Genomic_DNA"/>
</dbReference>
<dbReference type="EMBL" id="BC008374">
    <property type="protein sequence ID" value="AAH08374.1"/>
    <property type="molecule type" value="mRNA"/>
</dbReference>
<dbReference type="EMBL" id="BC008375">
    <property type="protein sequence ID" value="AAH08375.1"/>
    <property type="molecule type" value="mRNA"/>
</dbReference>
<dbReference type="EMBL" id="BC030778">
    <property type="protein sequence ID" value="AAH30778.1"/>
    <property type="molecule type" value="mRNA"/>
</dbReference>
<dbReference type="EMBL" id="BC034974">
    <property type="protein sequence ID" value="AAH34974.1"/>
    <property type="molecule type" value="mRNA"/>
</dbReference>
<dbReference type="CCDS" id="CCDS42646.2">
    <molecule id="Q96HL8-1"/>
</dbReference>
<dbReference type="CCDS" id="CCDS54332.1">
    <molecule id="Q96HL8-2"/>
</dbReference>
<dbReference type="CCDS" id="CCDS62841.1">
    <molecule id="Q96HL8-4"/>
</dbReference>
<dbReference type="CCDS" id="CCDS62842.1">
    <molecule id="Q96HL8-3"/>
</dbReference>
<dbReference type="RefSeq" id="NP_001153069.1">
    <molecule id="Q96HL8-2"/>
    <property type="nucleotide sequence ID" value="NM_001159597.3"/>
</dbReference>
<dbReference type="RefSeq" id="NP_001269611.1">
    <molecule id="Q96HL8-4"/>
    <property type="nucleotide sequence ID" value="NM_001282682.2"/>
</dbReference>
<dbReference type="RefSeq" id="NP_001269616.1">
    <molecule id="Q96HL8-3"/>
    <property type="nucleotide sequence ID" value="NM_001282687.2"/>
</dbReference>
<dbReference type="RefSeq" id="NP_056492.2">
    <molecule id="Q96HL8-1"/>
    <property type="nucleotide sequence ID" value="NM_015677.4"/>
</dbReference>
<dbReference type="PDB" id="2D8H">
    <property type="method" value="NMR"/>
    <property type="chains" value="A=276-342"/>
</dbReference>
<dbReference type="PDBsum" id="2D8H"/>
<dbReference type="BMRB" id="Q96HL8"/>
<dbReference type="SMR" id="Q96HL8"/>
<dbReference type="BioGRID" id="117811">
    <property type="interactions" value="16"/>
</dbReference>
<dbReference type="FunCoup" id="Q96HL8">
    <property type="interactions" value="20"/>
</dbReference>
<dbReference type="IntAct" id="Q96HL8">
    <property type="interactions" value="8"/>
</dbReference>
<dbReference type="MINT" id="Q96HL8"/>
<dbReference type="STRING" id="9606.ENSP00000348471"/>
<dbReference type="iPTMnet" id="Q96HL8"/>
<dbReference type="PhosphoSitePlus" id="Q96HL8"/>
<dbReference type="BioMuta" id="SH3YL1"/>
<dbReference type="DMDM" id="74751912"/>
<dbReference type="jPOST" id="Q96HL8"/>
<dbReference type="MassIVE" id="Q96HL8"/>
<dbReference type="PaxDb" id="9606-ENSP00000348471"/>
<dbReference type="PeptideAtlas" id="Q96HL8"/>
<dbReference type="ProteomicsDB" id="76760">
    <molecule id="Q96HL8-1"/>
</dbReference>
<dbReference type="ProteomicsDB" id="76761">
    <molecule id="Q96HL8-2"/>
</dbReference>
<dbReference type="ProteomicsDB" id="76762">
    <molecule id="Q96HL8-3"/>
</dbReference>
<dbReference type="ProteomicsDB" id="76763">
    <molecule id="Q96HL8-4"/>
</dbReference>
<dbReference type="ProteomicsDB" id="76764">
    <molecule id="Q96HL8-5"/>
</dbReference>
<dbReference type="Antibodypedia" id="49866">
    <property type="antibodies" value="36 antibodies from 13 providers"/>
</dbReference>
<dbReference type="DNASU" id="26751"/>
<dbReference type="Ensembl" id="ENST00000356150.10">
    <molecule id="Q96HL8-1"/>
    <property type="protein sequence ID" value="ENSP00000348471.5"/>
    <property type="gene ID" value="ENSG00000035115.22"/>
</dbReference>
<dbReference type="Ensembl" id="ENST00000402632.5">
    <molecule id="Q96HL8-5"/>
    <property type="protein sequence ID" value="ENSP00000384910.1"/>
    <property type="gene ID" value="ENSG00000035115.22"/>
</dbReference>
<dbReference type="Ensembl" id="ENST00000403657.5">
    <molecule id="Q96HL8-4"/>
    <property type="protein sequence ID" value="ENSP00000385668.1"/>
    <property type="gene ID" value="ENSG00000035115.22"/>
</dbReference>
<dbReference type="Ensembl" id="ENST00000403658.5">
    <molecule id="Q96HL8-4"/>
    <property type="protein sequence ID" value="ENSP00000383928.1"/>
    <property type="gene ID" value="ENSG00000035115.22"/>
</dbReference>
<dbReference type="Ensembl" id="ENST00000403712.6">
    <molecule id="Q96HL8-2"/>
    <property type="protein sequence ID" value="ENSP00000384276.1"/>
    <property type="gene ID" value="ENSG00000035115.22"/>
</dbReference>
<dbReference type="Ensembl" id="ENST00000405430.5">
    <molecule id="Q96HL8-1"/>
    <property type="protein sequence ID" value="ENSP00000384269.1"/>
    <property type="gene ID" value="ENSG00000035115.22"/>
</dbReference>
<dbReference type="Ensembl" id="ENST00000626873.2">
    <molecule id="Q96HL8-3"/>
    <property type="protein sequence ID" value="ENSP00000485824.1"/>
    <property type="gene ID" value="ENSG00000035115.22"/>
</dbReference>
<dbReference type="GeneID" id="26751"/>
<dbReference type="KEGG" id="hsa:26751"/>
<dbReference type="MANE-Select" id="ENST00000356150.10">
    <property type="protein sequence ID" value="ENSP00000348471.5"/>
    <property type="RefSeq nucleotide sequence ID" value="NM_015677.4"/>
    <property type="RefSeq protein sequence ID" value="NP_056492.2"/>
</dbReference>
<dbReference type="UCSC" id="uc002qvx.5">
    <molecule id="Q96HL8-1"/>
    <property type="organism name" value="human"/>
</dbReference>
<dbReference type="AGR" id="HGNC:29546"/>
<dbReference type="CTD" id="26751"/>
<dbReference type="DisGeNET" id="26751"/>
<dbReference type="GeneCards" id="SH3YL1"/>
<dbReference type="HGNC" id="HGNC:29546">
    <property type="gene designation" value="SH3YL1"/>
</dbReference>
<dbReference type="HPA" id="ENSG00000035115">
    <property type="expression patterns" value="Low tissue specificity"/>
</dbReference>
<dbReference type="neXtProt" id="NX_Q96HL8"/>
<dbReference type="OpenTargets" id="ENSG00000035115"/>
<dbReference type="PharmGKB" id="PA128394643"/>
<dbReference type="VEuPathDB" id="HostDB:ENSG00000035115"/>
<dbReference type="eggNOG" id="KOG1843">
    <property type="taxonomic scope" value="Eukaryota"/>
</dbReference>
<dbReference type="GeneTree" id="ENSGT00510000048137"/>
<dbReference type="HOGENOM" id="CLU_015320_2_1_1"/>
<dbReference type="InParanoid" id="Q96HL8"/>
<dbReference type="OMA" id="SNCKARN"/>
<dbReference type="OrthoDB" id="443981at2759"/>
<dbReference type="PAN-GO" id="Q96HL8">
    <property type="GO annotations" value="2 GO annotations based on evolutionary models"/>
</dbReference>
<dbReference type="PhylomeDB" id="Q96HL8"/>
<dbReference type="TreeFam" id="TF331022"/>
<dbReference type="PathwayCommons" id="Q96HL8"/>
<dbReference type="SignaLink" id="Q96HL8"/>
<dbReference type="BioGRID-ORCS" id="26751">
    <property type="hits" value="9 hits in 1156 CRISPR screens"/>
</dbReference>
<dbReference type="ChiTaRS" id="SH3YL1">
    <property type="organism name" value="human"/>
</dbReference>
<dbReference type="EvolutionaryTrace" id="Q96HL8"/>
<dbReference type="GenomeRNAi" id="26751"/>
<dbReference type="Pharos" id="Q96HL8">
    <property type="development level" value="Tdark"/>
</dbReference>
<dbReference type="PRO" id="PR:Q96HL8"/>
<dbReference type="Proteomes" id="UP000005640">
    <property type="component" value="Chromosome 2"/>
</dbReference>
<dbReference type="RNAct" id="Q96HL8">
    <property type="molecule type" value="protein"/>
</dbReference>
<dbReference type="Bgee" id="ENSG00000035115">
    <property type="expression patterns" value="Expressed in nephron tubule and 210 other cell types or tissues"/>
</dbReference>
<dbReference type="ExpressionAtlas" id="Q96HL8">
    <property type="expression patterns" value="baseline and differential"/>
</dbReference>
<dbReference type="GO" id="GO:0032587">
    <property type="term" value="C:ruffle membrane"/>
    <property type="evidence" value="ECO:0000314"/>
    <property type="project" value="MGI"/>
</dbReference>
<dbReference type="GO" id="GO:0019902">
    <property type="term" value="F:phosphatase binding"/>
    <property type="evidence" value="ECO:0000314"/>
    <property type="project" value="MGI"/>
</dbReference>
<dbReference type="GO" id="GO:0035091">
    <property type="term" value="F:phosphatidylinositol binding"/>
    <property type="evidence" value="ECO:0000314"/>
    <property type="project" value="MGI"/>
</dbReference>
<dbReference type="GO" id="GO:0006661">
    <property type="term" value="P:phosphatidylinositol biosynthetic process"/>
    <property type="evidence" value="ECO:0007669"/>
    <property type="project" value="Ensembl"/>
</dbReference>
<dbReference type="GO" id="GO:1900027">
    <property type="term" value="P:regulation of ruffle assembly"/>
    <property type="evidence" value="ECO:0000318"/>
    <property type="project" value="GO_Central"/>
</dbReference>
<dbReference type="CDD" id="cd11841">
    <property type="entry name" value="SH3_SH3YL1_like"/>
    <property type="match status" value="1"/>
</dbReference>
<dbReference type="CDD" id="cd11525">
    <property type="entry name" value="SYLF_SH3YL1_like"/>
    <property type="match status" value="1"/>
</dbReference>
<dbReference type="FunFam" id="2.30.30.40:FF:000100">
    <property type="entry name" value="SH3 domain-containing YSC84-like protein 1"/>
    <property type="match status" value="1"/>
</dbReference>
<dbReference type="Gene3D" id="2.30.30.40">
    <property type="entry name" value="SH3 Domains"/>
    <property type="match status" value="1"/>
</dbReference>
<dbReference type="InterPro" id="IPR036028">
    <property type="entry name" value="SH3-like_dom_sf"/>
</dbReference>
<dbReference type="InterPro" id="IPR001452">
    <property type="entry name" value="SH3_domain"/>
</dbReference>
<dbReference type="InterPro" id="IPR051702">
    <property type="entry name" value="SH3_domain_YSC84-like"/>
</dbReference>
<dbReference type="InterPro" id="IPR035511">
    <property type="entry name" value="SH3YL1_SH3"/>
</dbReference>
<dbReference type="InterPro" id="IPR033643">
    <property type="entry name" value="SYLF_SH3YL1-like"/>
</dbReference>
<dbReference type="InterPro" id="IPR007461">
    <property type="entry name" value="Ysc84_actin-binding"/>
</dbReference>
<dbReference type="PANTHER" id="PTHR15629:SF2">
    <property type="entry name" value="SH3 DOMAIN-CONTAINING YSC84-LIKE PROTEIN 1"/>
    <property type="match status" value="1"/>
</dbReference>
<dbReference type="PANTHER" id="PTHR15629">
    <property type="entry name" value="SH3YL1 PROTEIN"/>
    <property type="match status" value="1"/>
</dbReference>
<dbReference type="Pfam" id="PF14604">
    <property type="entry name" value="SH3_9"/>
    <property type="match status" value="1"/>
</dbReference>
<dbReference type="Pfam" id="PF04366">
    <property type="entry name" value="Ysc84"/>
    <property type="match status" value="1"/>
</dbReference>
<dbReference type="PRINTS" id="PR00452">
    <property type="entry name" value="SH3DOMAIN"/>
</dbReference>
<dbReference type="SMART" id="SM00326">
    <property type="entry name" value="SH3"/>
    <property type="match status" value="1"/>
</dbReference>
<dbReference type="SUPFAM" id="SSF50044">
    <property type="entry name" value="SH3-domain"/>
    <property type="match status" value="1"/>
</dbReference>
<dbReference type="PROSITE" id="PS50002">
    <property type="entry name" value="SH3"/>
    <property type="match status" value="1"/>
</dbReference>
<reference key="1">
    <citation type="journal article" date="2004" name="Nat. Genet.">
        <title>Complete sequencing and characterization of 21,243 full-length human cDNAs.</title>
        <authorList>
            <person name="Ota T."/>
            <person name="Suzuki Y."/>
            <person name="Nishikawa T."/>
            <person name="Otsuki T."/>
            <person name="Sugiyama T."/>
            <person name="Irie R."/>
            <person name="Wakamatsu A."/>
            <person name="Hayashi K."/>
            <person name="Sato H."/>
            <person name="Nagai K."/>
            <person name="Kimura K."/>
            <person name="Makita H."/>
            <person name="Sekine M."/>
            <person name="Obayashi M."/>
            <person name="Nishi T."/>
            <person name="Shibahara T."/>
            <person name="Tanaka T."/>
            <person name="Ishii S."/>
            <person name="Yamamoto J."/>
            <person name="Saito K."/>
            <person name="Kawai Y."/>
            <person name="Isono Y."/>
            <person name="Nakamura Y."/>
            <person name="Nagahari K."/>
            <person name="Murakami K."/>
            <person name="Yasuda T."/>
            <person name="Iwayanagi T."/>
            <person name="Wagatsuma M."/>
            <person name="Shiratori A."/>
            <person name="Sudo H."/>
            <person name="Hosoiri T."/>
            <person name="Kaku Y."/>
            <person name="Kodaira H."/>
            <person name="Kondo H."/>
            <person name="Sugawara M."/>
            <person name="Takahashi M."/>
            <person name="Kanda K."/>
            <person name="Yokoi T."/>
            <person name="Furuya T."/>
            <person name="Kikkawa E."/>
            <person name="Omura Y."/>
            <person name="Abe K."/>
            <person name="Kamihara K."/>
            <person name="Katsuta N."/>
            <person name="Sato K."/>
            <person name="Tanikawa M."/>
            <person name="Yamazaki M."/>
            <person name="Ninomiya K."/>
            <person name="Ishibashi T."/>
            <person name="Yamashita H."/>
            <person name="Murakawa K."/>
            <person name="Fujimori K."/>
            <person name="Tanai H."/>
            <person name="Kimata M."/>
            <person name="Watanabe M."/>
            <person name="Hiraoka S."/>
            <person name="Chiba Y."/>
            <person name="Ishida S."/>
            <person name="Ono Y."/>
            <person name="Takiguchi S."/>
            <person name="Watanabe S."/>
            <person name="Yosida M."/>
            <person name="Hotuta T."/>
            <person name="Kusano J."/>
            <person name="Kanehori K."/>
            <person name="Takahashi-Fujii A."/>
            <person name="Hara H."/>
            <person name="Tanase T.-O."/>
            <person name="Nomura Y."/>
            <person name="Togiya S."/>
            <person name="Komai F."/>
            <person name="Hara R."/>
            <person name="Takeuchi K."/>
            <person name="Arita M."/>
            <person name="Imose N."/>
            <person name="Musashino K."/>
            <person name="Yuuki H."/>
            <person name="Oshima A."/>
            <person name="Sasaki N."/>
            <person name="Aotsuka S."/>
            <person name="Yoshikawa Y."/>
            <person name="Matsunawa H."/>
            <person name="Ichihara T."/>
            <person name="Shiohata N."/>
            <person name="Sano S."/>
            <person name="Moriya S."/>
            <person name="Momiyama H."/>
            <person name="Satoh N."/>
            <person name="Takami S."/>
            <person name="Terashima Y."/>
            <person name="Suzuki O."/>
            <person name="Nakagawa S."/>
            <person name="Senoh A."/>
            <person name="Mizoguchi H."/>
            <person name="Goto Y."/>
            <person name="Shimizu F."/>
            <person name="Wakebe H."/>
            <person name="Hishigaki H."/>
            <person name="Watanabe T."/>
            <person name="Sugiyama A."/>
            <person name="Takemoto M."/>
            <person name="Kawakami B."/>
            <person name="Yamazaki M."/>
            <person name="Watanabe K."/>
            <person name="Kumagai A."/>
            <person name="Itakura S."/>
            <person name="Fukuzumi Y."/>
            <person name="Fujimori Y."/>
            <person name="Komiyama M."/>
            <person name="Tashiro H."/>
            <person name="Tanigami A."/>
            <person name="Fujiwara T."/>
            <person name="Ono T."/>
            <person name="Yamada K."/>
            <person name="Fujii Y."/>
            <person name="Ozaki K."/>
            <person name="Hirao M."/>
            <person name="Ohmori Y."/>
            <person name="Kawabata A."/>
            <person name="Hikiji T."/>
            <person name="Kobatake N."/>
            <person name="Inagaki H."/>
            <person name="Ikema Y."/>
            <person name="Okamoto S."/>
            <person name="Okitani R."/>
            <person name="Kawakami T."/>
            <person name="Noguchi S."/>
            <person name="Itoh T."/>
            <person name="Shigeta K."/>
            <person name="Senba T."/>
            <person name="Matsumura K."/>
            <person name="Nakajima Y."/>
            <person name="Mizuno T."/>
            <person name="Morinaga M."/>
            <person name="Sasaki M."/>
            <person name="Togashi T."/>
            <person name="Oyama M."/>
            <person name="Hata H."/>
            <person name="Watanabe M."/>
            <person name="Komatsu T."/>
            <person name="Mizushima-Sugano J."/>
            <person name="Satoh T."/>
            <person name="Shirai Y."/>
            <person name="Takahashi Y."/>
            <person name="Nakagawa K."/>
            <person name="Okumura K."/>
            <person name="Nagase T."/>
            <person name="Nomura N."/>
            <person name="Kikuchi H."/>
            <person name="Masuho Y."/>
            <person name="Yamashita R."/>
            <person name="Nakai K."/>
            <person name="Yada T."/>
            <person name="Nakamura Y."/>
            <person name="Ohara O."/>
            <person name="Isogai T."/>
            <person name="Sugano S."/>
        </authorList>
    </citation>
    <scope>NUCLEOTIDE SEQUENCE [LARGE SCALE MRNA] (ISOFORMS 2 AND 4)</scope>
    <source>
        <tissue>Carcinoma</tissue>
        <tissue>Testis</tissue>
    </source>
</reference>
<reference key="2">
    <citation type="submission" date="2004-06" db="EMBL/GenBank/DDBJ databases">
        <title>Cloning of human full open reading frames in Gateway(TM) system entry vector (pDONR201).</title>
        <authorList>
            <person name="Ebert L."/>
            <person name="Schick M."/>
            <person name="Neubert P."/>
            <person name="Schatten R."/>
            <person name="Henze S."/>
            <person name="Korn B."/>
        </authorList>
    </citation>
    <scope>NUCLEOTIDE SEQUENCE [LARGE SCALE MRNA] (ISOFORM 2)</scope>
</reference>
<reference key="3">
    <citation type="journal article" date="2007" name="BMC Genomics">
        <title>The full-ORF clone resource of the German cDNA consortium.</title>
        <authorList>
            <person name="Bechtel S."/>
            <person name="Rosenfelder H."/>
            <person name="Duda A."/>
            <person name="Schmidt C.P."/>
            <person name="Ernst U."/>
            <person name="Wellenreuther R."/>
            <person name="Mehrle A."/>
            <person name="Schuster C."/>
            <person name="Bahr A."/>
            <person name="Bloecker H."/>
            <person name="Heubner D."/>
            <person name="Hoerlein A."/>
            <person name="Michel G."/>
            <person name="Wedler H."/>
            <person name="Koehrer K."/>
            <person name="Ottenwaelder B."/>
            <person name="Poustka A."/>
            <person name="Wiemann S."/>
            <person name="Schupp I."/>
        </authorList>
    </citation>
    <scope>NUCLEOTIDE SEQUENCE [LARGE SCALE MRNA] (ISOFORM 3)</scope>
    <source>
        <tissue>Uterus</tissue>
    </source>
</reference>
<reference key="4">
    <citation type="journal article" date="2005" name="Nature">
        <title>Generation and annotation of the DNA sequences of human chromosomes 2 and 4.</title>
        <authorList>
            <person name="Hillier L.W."/>
            <person name="Graves T.A."/>
            <person name="Fulton R.S."/>
            <person name="Fulton L.A."/>
            <person name="Pepin K.H."/>
            <person name="Minx P."/>
            <person name="Wagner-McPherson C."/>
            <person name="Layman D."/>
            <person name="Wylie K."/>
            <person name="Sekhon M."/>
            <person name="Becker M.C."/>
            <person name="Fewell G.A."/>
            <person name="Delehaunty K.D."/>
            <person name="Miner T.L."/>
            <person name="Nash W.E."/>
            <person name="Kremitzki C."/>
            <person name="Oddy L."/>
            <person name="Du H."/>
            <person name="Sun H."/>
            <person name="Bradshaw-Cordum H."/>
            <person name="Ali J."/>
            <person name="Carter J."/>
            <person name="Cordes M."/>
            <person name="Harris A."/>
            <person name="Isak A."/>
            <person name="van Brunt A."/>
            <person name="Nguyen C."/>
            <person name="Du F."/>
            <person name="Courtney L."/>
            <person name="Kalicki J."/>
            <person name="Ozersky P."/>
            <person name="Abbott S."/>
            <person name="Armstrong J."/>
            <person name="Belter E.A."/>
            <person name="Caruso L."/>
            <person name="Cedroni M."/>
            <person name="Cotton M."/>
            <person name="Davidson T."/>
            <person name="Desai A."/>
            <person name="Elliott G."/>
            <person name="Erb T."/>
            <person name="Fronick C."/>
            <person name="Gaige T."/>
            <person name="Haakenson W."/>
            <person name="Haglund K."/>
            <person name="Holmes A."/>
            <person name="Harkins R."/>
            <person name="Kim K."/>
            <person name="Kruchowski S.S."/>
            <person name="Strong C.M."/>
            <person name="Grewal N."/>
            <person name="Goyea E."/>
            <person name="Hou S."/>
            <person name="Levy A."/>
            <person name="Martinka S."/>
            <person name="Mead K."/>
            <person name="McLellan M.D."/>
            <person name="Meyer R."/>
            <person name="Randall-Maher J."/>
            <person name="Tomlinson C."/>
            <person name="Dauphin-Kohlberg S."/>
            <person name="Kozlowicz-Reilly A."/>
            <person name="Shah N."/>
            <person name="Swearengen-Shahid S."/>
            <person name="Snider J."/>
            <person name="Strong J.T."/>
            <person name="Thompson J."/>
            <person name="Yoakum M."/>
            <person name="Leonard S."/>
            <person name="Pearman C."/>
            <person name="Trani L."/>
            <person name="Radionenko M."/>
            <person name="Waligorski J.E."/>
            <person name="Wang C."/>
            <person name="Rock S.M."/>
            <person name="Tin-Wollam A.-M."/>
            <person name="Maupin R."/>
            <person name="Latreille P."/>
            <person name="Wendl M.C."/>
            <person name="Yang S.-P."/>
            <person name="Pohl C."/>
            <person name="Wallis J.W."/>
            <person name="Spieth J."/>
            <person name="Bieri T.A."/>
            <person name="Berkowicz N."/>
            <person name="Nelson J.O."/>
            <person name="Osborne J."/>
            <person name="Ding L."/>
            <person name="Meyer R."/>
            <person name="Sabo A."/>
            <person name="Shotland Y."/>
            <person name="Sinha P."/>
            <person name="Wohldmann P.E."/>
            <person name="Cook L.L."/>
            <person name="Hickenbotham M.T."/>
            <person name="Eldred J."/>
            <person name="Williams D."/>
            <person name="Jones T.A."/>
            <person name="She X."/>
            <person name="Ciccarelli F.D."/>
            <person name="Izaurralde E."/>
            <person name="Taylor J."/>
            <person name="Schmutz J."/>
            <person name="Myers R.M."/>
            <person name="Cox D.R."/>
            <person name="Huang X."/>
            <person name="McPherson J.D."/>
            <person name="Mardis E.R."/>
            <person name="Clifton S.W."/>
            <person name="Warren W.C."/>
            <person name="Chinwalla A.T."/>
            <person name="Eddy S.R."/>
            <person name="Marra M.A."/>
            <person name="Ovcharenko I."/>
            <person name="Furey T.S."/>
            <person name="Miller W."/>
            <person name="Eichler E.E."/>
            <person name="Bork P."/>
            <person name="Suyama M."/>
            <person name="Torrents D."/>
            <person name="Waterston R.H."/>
            <person name="Wilson R.K."/>
        </authorList>
    </citation>
    <scope>NUCLEOTIDE SEQUENCE [LARGE SCALE GENOMIC DNA]</scope>
</reference>
<reference key="5">
    <citation type="journal article" date="2004" name="Genome Res.">
        <title>The status, quality, and expansion of the NIH full-length cDNA project: the Mammalian Gene Collection (MGC).</title>
        <authorList>
            <consortium name="The MGC Project Team"/>
        </authorList>
    </citation>
    <scope>NUCLEOTIDE SEQUENCE [LARGE SCALE MRNA] (ISOFORMS 1; 2 AND 5)</scope>
    <source>
        <tissue>Testis</tissue>
        <tissue>Urinary bladder</tissue>
    </source>
</reference>
<reference key="6">
    <citation type="submission" date="2009-02" db="PDB data bank">
        <title>Solution structure of the SH3 domain of hypothetical protein SH3YL1.</title>
        <authorList>
            <consortium name="RIKEN structural genomics initiative (RSGI)"/>
        </authorList>
    </citation>
    <scope>STRUCTURE BY NMR OF 273-342</scope>
</reference>
<evidence type="ECO:0000250" key="1"/>
<evidence type="ECO:0000255" key="2">
    <source>
        <dbReference type="PROSITE-ProRule" id="PRU00192"/>
    </source>
</evidence>
<evidence type="ECO:0000256" key="3">
    <source>
        <dbReference type="SAM" id="MobiDB-lite"/>
    </source>
</evidence>
<evidence type="ECO:0000303" key="4">
    <source>
    </source>
</evidence>
<evidence type="ECO:0000303" key="5">
    <source>
    </source>
</evidence>
<evidence type="ECO:0000303" key="6">
    <source>
    </source>
</evidence>
<evidence type="ECO:0000303" key="7">
    <source ref="2"/>
</evidence>
<evidence type="ECO:0000305" key="8"/>
<evidence type="ECO:0007829" key="9">
    <source>
        <dbReference type="PDB" id="2D8H"/>
    </source>
</evidence>
<gene>
    <name type="primary">SH3YL1</name>
</gene>
<organism>
    <name type="scientific">Homo sapiens</name>
    <name type="common">Human</name>
    <dbReference type="NCBI Taxonomy" id="9606"/>
    <lineage>
        <taxon>Eukaryota</taxon>
        <taxon>Metazoa</taxon>
        <taxon>Chordata</taxon>
        <taxon>Craniata</taxon>
        <taxon>Vertebrata</taxon>
        <taxon>Euteleostomi</taxon>
        <taxon>Mammalia</taxon>
        <taxon>Eutheria</taxon>
        <taxon>Euarchontoglires</taxon>
        <taxon>Primates</taxon>
        <taxon>Haplorrhini</taxon>
        <taxon>Catarrhini</taxon>
        <taxon>Hominidae</taxon>
        <taxon>Homo</taxon>
    </lineage>
</organism>
<protein>
    <recommendedName>
        <fullName>SH3 domain-containing YSC84-like protein 1</fullName>
    </recommendedName>
</protein>
<sequence>MNNPIPSNLKSEAKKAAKILREFTEITSRNGPDKIIPAHVIAKAKGLAILSVIKAGFLVTARGGSGIVVARLPDGKWSAPSAIGIAGLGGGFEIGIEVSDLVIILNYDRAVEAFAKGGNLTLGGNLTVAVGPLGRNLEGNVALRSSAAVFTYCKSRGLFAGVSLEGSCLIERKETNRKFYCQDIRAYDILFGDTPRPAQAEDLYEILDSFTEKYENEGQRINARKAAREQRKSSAKELPPKPLSRPQQSSAPVQLNSGSQSNRNEYKLYPGLSSYHERVGNLNQPIEVTALYSFEGQQPGDLNFQAGDRITVISKTDSHFDWWEGKLRGQTGIFPANYVTMN</sequence>
<feature type="chain" id="PRO_0000341560" description="SH3 domain-containing YSC84-like protein 1">
    <location>
        <begin position="1"/>
        <end position="342"/>
    </location>
</feature>
<feature type="domain" description="SH3" evidence="2">
    <location>
        <begin position="283"/>
        <end position="342"/>
    </location>
</feature>
<feature type="region of interest" description="Disordered" evidence="3">
    <location>
        <begin position="218"/>
        <end position="266"/>
    </location>
</feature>
<feature type="compositionally biased region" description="Basic and acidic residues" evidence="3">
    <location>
        <begin position="226"/>
        <end position="239"/>
    </location>
</feature>
<feature type="compositionally biased region" description="Polar residues" evidence="3">
    <location>
        <begin position="245"/>
        <end position="263"/>
    </location>
</feature>
<feature type="splice variant" id="VSP_034332" description="In isoform 3 and isoform 4." evidence="4 6">
    <location>
        <begin position="1"/>
        <end position="96"/>
    </location>
</feature>
<feature type="splice variant" id="VSP_034333" description="In isoform 3 and isoform 4." evidence="4 6">
    <original>E</original>
    <variation>M</variation>
    <location>
        <position position="97"/>
    </location>
</feature>
<feature type="splice variant" id="VSP_034334" description="In isoform 5." evidence="5">
    <original>VSDLVIILNYDRAVEAFAKGGNLTLGGNLTVAVGPLGRNLEGNVALRSSAAVFTYCKSRGLFAGVSLEGSCLIERKETNRKFYCQDIRAYDILFGDTPRPAQAEDLYEILDSFTEKYENEGQRINARKAAREQRKSSAKELPPKPLSRPQQSSAPVQLNSGSQSNRNEYKLYPGLSSYHERVGNLNQPIEVTALYSFEGQQPGDLNFQAGDRITVISKTDSHFDWWEGKLRGQTGIFPANYVTMN</original>
    <variation>THLQLHIPSEHCPGCLP</variation>
    <location>
        <begin position="98"/>
        <end position="342"/>
    </location>
</feature>
<feature type="splice variant" id="VSP_034335" description="In isoform 2 and isoform 4." evidence="4 5 7">
    <location>
        <begin position="262"/>
        <end position="280"/>
    </location>
</feature>
<feature type="sequence conflict" description="In Ref. 5; AAH34974/AAH30778." evidence="8" ref="5">
    <original>P</original>
    <variation>H</variation>
    <location>
        <position position="4"/>
    </location>
</feature>
<feature type="sequence conflict" description="In Ref. 1; BAF85001." evidence="8" ref="1">
    <original>I</original>
    <variation>V</variation>
    <location>
        <position position="104"/>
    </location>
</feature>
<feature type="sequence conflict" description="In Ref. 1; BAF85001." evidence="8" ref="1">
    <original>V</original>
    <variation>M</variation>
    <location>
        <position position="141"/>
    </location>
</feature>
<feature type="strand" evidence="9">
    <location>
        <begin position="286"/>
        <end position="289"/>
    </location>
</feature>
<feature type="strand" evidence="9">
    <location>
        <begin position="309"/>
        <end position="314"/>
    </location>
</feature>
<feature type="strand" evidence="9">
    <location>
        <begin position="319"/>
        <end position="327"/>
    </location>
</feature>
<feature type="strand" evidence="9">
    <location>
        <begin position="330"/>
        <end position="335"/>
    </location>
</feature>
<feature type="helix" evidence="9">
    <location>
        <begin position="336"/>
        <end position="338"/>
    </location>
</feature>
<keyword id="KW-0002">3D-structure</keyword>
<keyword id="KW-0025">Alternative splicing</keyword>
<keyword id="KW-1267">Proteomics identification</keyword>
<keyword id="KW-1185">Reference proteome</keyword>
<keyword id="KW-0728">SH3 domain</keyword>
<name>SH3Y1_HUMAN</name>
<comment type="subunit">
    <text evidence="1">Interacts with SH3D19.</text>
</comment>
<comment type="interaction">
    <interactant intactId="EBI-722667">
        <id>Q96HL8</id>
    </interactant>
    <interactant intactId="EBI-744302">
        <id>P14136</id>
        <label>GFAP</label>
    </interactant>
    <organismsDiffer>false</organismsDiffer>
    <experiments>4</experiments>
</comment>
<comment type="interaction">
    <interactant intactId="EBI-722667">
        <id>Q96HL8</id>
    </interactant>
    <interactant intactId="EBI-2563437">
        <id>Q5HYK7</id>
        <label>SH3D19</label>
    </interactant>
    <organismsDiffer>false</organismsDiffer>
    <experiments>4</experiments>
</comment>
<comment type="interaction">
    <interactant intactId="EBI-722667">
        <id>Q96HL8</id>
    </interactant>
    <interactant intactId="EBI-14699032">
        <id>Q5HYK7-2</id>
        <label>SH3D19</label>
    </interactant>
    <organismsDiffer>false</organismsDiffer>
    <experiments>7</experiments>
</comment>
<comment type="interaction">
    <interactant intactId="EBI-722667">
        <id>Q96HL8</id>
    </interactant>
    <interactant intactId="EBI-4400866">
        <id>Q9H9H4</id>
        <label>VPS37B</label>
    </interactant>
    <organismsDiffer>false</organismsDiffer>
    <experiments>7</experiments>
</comment>
<comment type="interaction">
    <interactant intactId="EBI-722667">
        <id>Q96HL8</id>
    </interactant>
    <interactant intactId="EBI-740434">
        <id>O15156</id>
        <label>ZBTB7B</label>
    </interactant>
    <organismsDiffer>false</organismsDiffer>
    <experiments>3</experiments>
</comment>
<comment type="alternative products">
    <event type="alternative splicing"/>
    <isoform>
        <id>Q96HL8-1</id>
        <name>1</name>
        <sequence type="displayed"/>
    </isoform>
    <isoform>
        <id>Q96HL8-2</id>
        <name>2</name>
        <sequence type="described" ref="VSP_034335"/>
    </isoform>
    <isoform>
        <id>Q96HL8-3</id>
        <name>3</name>
        <sequence type="described" ref="VSP_034332 VSP_034333"/>
    </isoform>
    <isoform>
        <id>Q96HL8-4</id>
        <name>4</name>
        <sequence type="described" ref="VSP_034332 VSP_034333 VSP_034335"/>
    </isoform>
    <isoform>
        <id>Q96HL8-5</id>
        <name>5</name>
        <sequence type="described" ref="VSP_034334"/>
    </isoform>
</comment>
<comment type="similarity">
    <text evidence="8">Belongs to the SH3YL1 family.</text>
</comment>